<accession>A7NID0</accession>
<evidence type="ECO:0000255" key="1">
    <source>
        <dbReference type="HAMAP-Rule" id="MF_00003"/>
    </source>
</evidence>
<reference key="1">
    <citation type="submission" date="2007-08" db="EMBL/GenBank/DDBJ databases">
        <title>Complete sequence of Roseiflexus castenholzii DSM 13941.</title>
        <authorList>
            <consortium name="US DOE Joint Genome Institute"/>
            <person name="Copeland A."/>
            <person name="Lucas S."/>
            <person name="Lapidus A."/>
            <person name="Barry K."/>
            <person name="Glavina del Rio T."/>
            <person name="Dalin E."/>
            <person name="Tice H."/>
            <person name="Pitluck S."/>
            <person name="Thompson L.S."/>
            <person name="Brettin T."/>
            <person name="Bruce D."/>
            <person name="Detter J.C."/>
            <person name="Han C."/>
            <person name="Tapia R."/>
            <person name="Schmutz J."/>
            <person name="Larimer F."/>
            <person name="Land M."/>
            <person name="Hauser L."/>
            <person name="Kyrpides N."/>
            <person name="Mikhailova N."/>
            <person name="Bryant D.A."/>
            <person name="Hanada S."/>
            <person name="Tsukatani Y."/>
            <person name="Richardson P."/>
        </authorList>
    </citation>
    <scope>NUCLEOTIDE SEQUENCE [LARGE SCALE GENOMIC DNA]</scope>
    <source>
        <strain>DSM 13941 / HLO8</strain>
    </source>
</reference>
<gene>
    <name evidence="1" type="primary">rbfA</name>
    <name type="ordered locus">Rcas_1131</name>
</gene>
<name>RBFA_ROSCS</name>
<keyword id="KW-0963">Cytoplasm</keyword>
<keyword id="KW-1185">Reference proteome</keyword>
<keyword id="KW-0690">Ribosome biogenesis</keyword>
<feature type="chain" id="PRO_1000073775" description="Ribosome-binding factor A">
    <location>
        <begin position="1"/>
        <end position="130"/>
    </location>
</feature>
<proteinExistence type="inferred from homology"/>
<protein>
    <recommendedName>
        <fullName evidence="1">Ribosome-binding factor A</fullName>
    </recommendedName>
</protein>
<sequence length="130" mass="14793">MSKRTEQLGHEIQRILGEILQYELKDPRVGFATVVGVEVTADLQIARVRISVMGTPEERKETMAALERAKGFLRRRLAEELNYLRFVPELRLILDTSVDYSLHIDELLRRAAAERAGSPPPQPEDDKPAE</sequence>
<comment type="function">
    <text evidence="1">One of several proteins that assist in the late maturation steps of the functional core of the 30S ribosomal subunit. Associates with free 30S ribosomal subunits (but not with 30S subunits that are part of 70S ribosomes or polysomes). Required for efficient processing of 16S rRNA. May interact with the 5'-terminal helix region of 16S rRNA.</text>
</comment>
<comment type="subunit">
    <text evidence="1">Monomer. Binds 30S ribosomal subunits, but not 50S ribosomal subunits or 70S ribosomes.</text>
</comment>
<comment type="subcellular location">
    <subcellularLocation>
        <location evidence="1">Cytoplasm</location>
    </subcellularLocation>
</comment>
<comment type="similarity">
    <text evidence="1">Belongs to the RbfA family.</text>
</comment>
<organism>
    <name type="scientific">Roseiflexus castenholzii (strain DSM 13941 / HLO8)</name>
    <dbReference type="NCBI Taxonomy" id="383372"/>
    <lineage>
        <taxon>Bacteria</taxon>
        <taxon>Bacillati</taxon>
        <taxon>Chloroflexota</taxon>
        <taxon>Chloroflexia</taxon>
        <taxon>Chloroflexales</taxon>
        <taxon>Roseiflexineae</taxon>
        <taxon>Roseiflexaceae</taxon>
        <taxon>Roseiflexus</taxon>
    </lineage>
</organism>
<dbReference type="EMBL" id="CP000804">
    <property type="protein sequence ID" value="ABU57230.1"/>
    <property type="molecule type" value="Genomic_DNA"/>
</dbReference>
<dbReference type="RefSeq" id="WP_012119660.1">
    <property type="nucleotide sequence ID" value="NC_009767.1"/>
</dbReference>
<dbReference type="SMR" id="A7NID0"/>
<dbReference type="STRING" id="383372.Rcas_1131"/>
<dbReference type="KEGG" id="rca:Rcas_1131"/>
<dbReference type="eggNOG" id="COG0858">
    <property type="taxonomic scope" value="Bacteria"/>
</dbReference>
<dbReference type="HOGENOM" id="CLU_089475_6_3_0"/>
<dbReference type="OrthoDB" id="307788at2"/>
<dbReference type="Proteomes" id="UP000000263">
    <property type="component" value="Chromosome"/>
</dbReference>
<dbReference type="GO" id="GO:0005829">
    <property type="term" value="C:cytosol"/>
    <property type="evidence" value="ECO:0007669"/>
    <property type="project" value="TreeGrafter"/>
</dbReference>
<dbReference type="GO" id="GO:0043024">
    <property type="term" value="F:ribosomal small subunit binding"/>
    <property type="evidence" value="ECO:0007669"/>
    <property type="project" value="TreeGrafter"/>
</dbReference>
<dbReference type="GO" id="GO:0030490">
    <property type="term" value="P:maturation of SSU-rRNA"/>
    <property type="evidence" value="ECO:0007669"/>
    <property type="project" value="UniProtKB-UniRule"/>
</dbReference>
<dbReference type="Gene3D" id="3.30.300.20">
    <property type="match status" value="1"/>
</dbReference>
<dbReference type="HAMAP" id="MF_00003">
    <property type="entry name" value="RbfA"/>
    <property type="match status" value="1"/>
</dbReference>
<dbReference type="InterPro" id="IPR015946">
    <property type="entry name" value="KH_dom-like_a/b"/>
</dbReference>
<dbReference type="InterPro" id="IPR000238">
    <property type="entry name" value="RbfA"/>
</dbReference>
<dbReference type="InterPro" id="IPR023799">
    <property type="entry name" value="RbfA_dom_sf"/>
</dbReference>
<dbReference type="NCBIfam" id="TIGR00082">
    <property type="entry name" value="rbfA"/>
    <property type="match status" value="1"/>
</dbReference>
<dbReference type="PANTHER" id="PTHR33515">
    <property type="entry name" value="RIBOSOME-BINDING FACTOR A, CHLOROPLASTIC-RELATED"/>
    <property type="match status" value="1"/>
</dbReference>
<dbReference type="PANTHER" id="PTHR33515:SF1">
    <property type="entry name" value="RIBOSOME-BINDING FACTOR A, CHLOROPLASTIC-RELATED"/>
    <property type="match status" value="1"/>
</dbReference>
<dbReference type="Pfam" id="PF02033">
    <property type="entry name" value="RBFA"/>
    <property type="match status" value="1"/>
</dbReference>
<dbReference type="SUPFAM" id="SSF89919">
    <property type="entry name" value="Ribosome-binding factor A, RbfA"/>
    <property type="match status" value="1"/>
</dbReference>